<reference key="1">
    <citation type="journal article" date="1992" name="Proc. Natl. Acad. Sci. U.S.A.">
        <title>Diversification of the Wnt gene family on the ancestral lineage of vertebrates.</title>
        <authorList>
            <person name="Sidow A."/>
        </authorList>
    </citation>
    <scope>NUCLEOTIDE SEQUENCE [GENOMIC DNA]</scope>
</reference>
<gene>
    <name type="primary">WNT7B</name>
</gene>
<accession>P28130</accession>
<dbReference type="EMBL" id="M91286">
    <property type="protein sequence ID" value="AAA49635.1"/>
    <property type="molecule type" value="Genomic_DNA"/>
</dbReference>
<dbReference type="SMR" id="P28130"/>
<dbReference type="GlyCosmos" id="P28130">
    <property type="glycosylation" value="1 site, No reported glycans"/>
</dbReference>
<dbReference type="HOGENOM" id="CLU_033039_1_4_1"/>
<dbReference type="InParanoid" id="P28130"/>
<dbReference type="OrthoDB" id="5945655at2759"/>
<dbReference type="Proteomes" id="UP000001645">
    <property type="component" value="Unplaced"/>
</dbReference>
<dbReference type="GO" id="GO:0005615">
    <property type="term" value="C:extracellular space"/>
    <property type="evidence" value="ECO:0007669"/>
    <property type="project" value="TreeGrafter"/>
</dbReference>
<dbReference type="GO" id="GO:0005125">
    <property type="term" value="F:cytokine activity"/>
    <property type="evidence" value="ECO:0007669"/>
    <property type="project" value="TreeGrafter"/>
</dbReference>
<dbReference type="GO" id="GO:0005109">
    <property type="term" value="F:frizzled binding"/>
    <property type="evidence" value="ECO:0007669"/>
    <property type="project" value="TreeGrafter"/>
</dbReference>
<dbReference type="GO" id="GO:0048513">
    <property type="term" value="P:animal organ development"/>
    <property type="evidence" value="ECO:0007669"/>
    <property type="project" value="UniProtKB-ARBA"/>
</dbReference>
<dbReference type="GO" id="GO:0060070">
    <property type="term" value="P:canonical Wnt signaling pathway"/>
    <property type="evidence" value="ECO:0007669"/>
    <property type="project" value="TreeGrafter"/>
</dbReference>
<dbReference type="GO" id="GO:0045165">
    <property type="term" value="P:cell fate commitment"/>
    <property type="evidence" value="ECO:0007669"/>
    <property type="project" value="TreeGrafter"/>
</dbReference>
<dbReference type="GO" id="GO:0030182">
    <property type="term" value="P:neuron differentiation"/>
    <property type="evidence" value="ECO:0007669"/>
    <property type="project" value="TreeGrafter"/>
</dbReference>
<dbReference type="GO" id="GO:0046330">
    <property type="term" value="P:positive regulation of JNK cascade"/>
    <property type="evidence" value="ECO:0007669"/>
    <property type="project" value="TreeGrafter"/>
</dbReference>
<dbReference type="Gene3D" id="3.30.2460.20">
    <property type="match status" value="1"/>
</dbReference>
<dbReference type="InterPro" id="IPR005817">
    <property type="entry name" value="Wnt"/>
</dbReference>
<dbReference type="InterPro" id="IPR013300">
    <property type="entry name" value="Wnt7"/>
</dbReference>
<dbReference type="InterPro" id="IPR043158">
    <property type="entry name" value="Wnt_C"/>
</dbReference>
<dbReference type="PANTHER" id="PTHR12027:SF73">
    <property type="entry name" value="PROTEIN WNT-7B"/>
    <property type="match status" value="1"/>
</dbReference>
<dbReference type="PANTHER" id="PTHR12027">
    <property type="entry name" value="WNT RELATED"/>
    <property type="match status" value="1"/>
</dbReference>
<dbReference type="Pfam" id="PF00110">
    <property type="entry name" value="wnt"/>
    <property type="match status" value="1"/>
</dbReference>
<dbReference type="PRINTS" id="PR01891">
    <property type="entry name" value="WNT7PROTEIN"/>
</dbReference>
<dbReference type="SMART" id="SM00097">
    <property type="entry name" value="WNT1"/>
    <property type="match status" value="1"/>
</dbReference>
<protein>
    <recommendedName>
        <fullName>Protein Wnt-7b</fullName>
    </recommendedName>
</protein>
<organism>
    <name type="scientific">Meleagris gallopavo</name>
    <name type="common">Wild turkey</name>
    <dbReference type="NCBI Taxonomy" id="9103"/>
    <lineage>
        <taxon>Eukaryota</taxon>
        <taxon>Metazoa</taxon>
        <taxon>Chordata</taxon>
        <taxon>Craniata</taxon>
        <taxon>Vertebrata</taxon>
        <taxon>Euteleostomi</taxon>
        <taxon>Archelosauria</taxon>
        <taxon>Archosauria</taxon>
        <taxon>Dinosauria</taxon>
        <taxon>Saurischia</taxon>
        <taxon>Theropoda</taxon>
        <taxon>Coelurosauria</taxon>
        <taxon>Aves</taxon>
        <taxon>Neognathae</taxon>
        <taxon>Galloanserae</taxon>
        <taxon>Galliformes</taxon>
        <taxon>Phasianidae</taxon>
        <taxon>Meleagridinae</taxon>
        <taxon>Meleagris</taxon>
    </lineage>
</organism>
<evidence type="ECO:0000250" key="1">
    <source>
        <dbReference type="UniProtKB" id="P27467"/>
    </source>
</evidence>
<evidence type="ECO:0000250" key="2">
    <source>
        <dbReference type="UniProtKB" id="P28026"/>
    </source>
</evidence>
<evidence type="ECO:0000250" key="3">
    <source>
        <dbReference type="UniProtKB" id="P28047"/>
    </source>
</evidence>
<evidence type="ECO:0000250" key="4">
    <source>
        <dbReference type="UniProtKB" id="P56704"/>
    </source>
</evidence>
<evidence type="ECO:0000250" key="5">
    <source>
        <dbReference type="UniProtKB" id="P56706"/>
    </source>
</evidence>
<evidence type="ECO:0000255" key="6"/>
<evidence type="ECO:0000305" key="7"/>
<proteinExistence type="inferred from homology"/>
<feature type="chain" id="PRO_0000200652" description="Protein Wnt-7b">
    <location>
        <begin position="1" status="less than"/>
        <end position="123" status="greater than"/>
    </location>
</feature>
<feature type="region of interest" description="Disordered linker" evidence="5">
    <location>
        <begin position="33"/>
        <end position="61"/>
    </location>
</feature>
<feature type="lipid moiety-binding region" description="O-palmitoleoyl serine; by PORCN" evidence="4">
    <location>
        <position position="1"/>
    </location>
</feature>
<feature type="glycosylation site" description="N-linked (GlcNAc...) asparagine" evidence="6">
    <location>
        <position position="90"/>
    </location>
</feature>
<feature type="disulfide bond" evidence="2">
    <location>
        <begin position="89"/>
        <end position="104"/>
    </location>
</feature>
<feature type="non-terminal residue">
    <location>
        <position position="1"/>
    </location>
</feature>
<feature type="non-terminal residue">
    <location>
        <position position="123"/>
    </location>
</feature>
<name>WNT7B_MELGA</name>
<comment type="function">
    <text evidence="3 5">Ligand for members of the frizzled family of seven transmembrane receptors that functions in the canonical Wnt/beta-catenin signaling pathway (By similarity). Required for normal fusion of the chorion and the allantois during placenta development (By similarity). Required for central nervous system (CNS) angiogenesis and blood-brain barrier regulation (By similarity).</text>
</comment>
<comment type="subcellular location">
    <subcellularLocation>
        <location evidence="5">Secreted</location>
        <location evidence="5">Extracellular space</location>
        <location evidence="5">Extracellular matrix</location>
    </subcellularLocation>
    <subcellularLocation>
        <location evidence="5">Secreted</location>
    </subcellularLocation>
</comment>
<comment type="PTM">
    <text evidence="1 4">Palmitoleoylation is required for efficient binding to frizzled receptors. Depalmitoleoylation leads to Wnt signaling pathway inhibition.</text>
</comment>
<comment type="similarity">
    <text evidence="7">Belongs to the Wnt family.</text>
</comment>
<keyword id="KW-0217">Developmental protein</keyword>
<keyword id="KW-1015">Disulfide bond</keyword>
<keyword id="KW-0272">Extracellular matrix</keyword>
<keyword id="KW-0325">Glycoprotein</keyword>
<keyword id="KW-0449">Lipoprotein</keyword>
<keyword id="KW-1185">Reference proteome</keyword>
<keyword id="KW-0964">Secreted</keyword>
<keyword id="KW-0879">Wnt signaling pathway</keyword>
<sequence>SGSCTTKTCWTTLPKFREIGYILKEKYNAAVQVEVVRASRLRQPTFLKIKQIKSYQKPMETDLVYIEKSPNYCEEDASTGSVGTQGRLCNRTSPNADGCDMMCCGRGYNTHQYTKVWQCNCKF</sequence>